<protein>
    <recommendedName>
        <fullName evidence="5">Zinc finger protein 418</fullName>
    </recommendedName>
</protein>
<dbReference type="EMBL" id="AY695825">
    <property type="protein sequence ID" value="AAU05132.1"/>
    <property type="molecule type" value="mRNA"/>
</dbReference>
<dbReference type="EMBL" id="AB075836">
    <property type="protein sequence ID" value="BAB85542.1"/>
    <property type="status" value="ALT_INIT"/>
    <property type="molecule type" value="mRNA"/>
</dbReference>
<dbReference type="EMBL" id="AK056113">
    <property type="protein sequence ID" value="BAB71096.1"/>
    <property type="molecule type" value="mRNA"/>
</dbReference>
<dbReference type="EMBL" id="AC010326">
    <property type="status" value="NOT_ANNOTATED_CDS"/>
    <property type="molecule type" value="Genomic_DNA"/>
</dbReference>
<dbReference type="EMBL" id="BC112244">
    <property type="protein sequence ID" value="AAI12245.1"/>
    <property type="molecule type" value="mRNA"/>
</dbReference>
<dbReference type="EMBL" id="BC113707">
    <property type="protein sequence ID" value="AAI13708.1"/>
    <property type="molecule type" value="mRNA"/>
</dbReference>
<dbReference type="CCDS" id="CCDS42642.1"/>
<dbReference type="RefSeq" id="NP_001303956.1">
    <property type="nucleotide sequence ID" value="NM_001317027.1"/>
</dbReference>
<dbReference type="RefSeq" id="NP_001303957.1">
    <property type="nucleotide sequence ID" value="NM_001317028.1"/>
</dbReference>
<dbReference type="RefSeq" id="NP_001303958.1">
    <property type="nucleotide sequence ID" value="NM_001317029.2"/>
</dbReference>
<dbReference type="RefSeq" id="NP_001303959.1">
    <property type="nucleotide sequence ID" value="NM_001317030.1"/>
</dbReference>
<dbReference type="RefSeq" id="NP_597717.1">
    <property type="nucleotide sequence ID" value="NM_133460.3"/>
</dbReference>
<dbReference type="RefSeq" id="XP_016881801.1">
    <property type="nucleotide sequence ID" value="XM_017026312.1"/>
</dbReference>
<dbReference type="RefSeq" id="XP_016881802.1">
    <property type="nucleotide sequence ID" value="XM_017026313.2"/>
</dbReference>
<dbReference type="RefSeq" id="XP_047294166.1">
    <property type="nucleotide sequence ID" value="XM_047438210.1"/>
</dbReference>
<dbReference type="RefSeq" id="XP_047294167.1">
    <property type="nucleotide sequence ID" value="XM_047438211.1"/>
</dbReference>
<dbReference type="RefSeq" id="XP_047294168.1">
    <property type="nucleotide sequence ID" value="XM_047438212.1"/>
</dbReference>
<dbReference type="RefSeq" id="XP_047294170.1">
    <property type="nucleotide sequence ID" value="XM_047438214.1"/>
</dbReference>
<dbReference type="RefSeq" id="XP_047294171.1">
    <property type="nucleotide sequence ID" value="XM_047438215.1"/>
</dbReference>
<dbReference type="RefSeq" id="XP_047294172.1">
    <property type="nucleotide sequence ID" value="XM_047438216.1"/>
</dbReference>
<dbReference type="RefSeq" id="XP_047294173.1">
    <property type="nucleotide sequence ID" value="XM_047438217.1"/>
</dbReference>
<dbReference type="SMR" id="Q8TF45"/>
<dbReference type="BioGRID" id="127074">
    <property type="interactions" value="22"/>
</dbReference>
<dbReference type="FunCoup" id="Q8TF45">
    <property type="interactions" value="6"/>
</dbReference>
<dbReference type="IntAct" id="Q8TF45">
    <property type="interactions" value="22"/>
</dbReference>
<dbReference type="STRING" id="9606.ENSP00000407039"/>
<dbReference type="iPTMnet" id="Q8TF45"/>
<dbReference type="PhosphoSitePlus" id="Q8TF45"/>
<dbReference type="BioMuta" id="ZNF418"/>
<dbReference type="DMDM" id="23396985"/>
<dbReference type="jPOST" id="Q8TF45"/>
<dbReference type="MassIVE" id="Q8TF45"/>
<dbReference type="PaxDb" id="9606-ENSP00000379451"/>
<dbReference type="PeptideAtlas" id="Q8TF45"/>
<dbReference type="ProteomicsDB" id="74554"/>
<dbReference type="Pumba" id="Q8TF45"/>
<dbReference type="Antibodypedia" id="33292">
    <property type="antibodies" value="52 antibodies from 15 providers"/>
</dbReference>
<dbReference type="DNASU" id="147686"/>
<dbReference type="Ensembl" id="ENST00000396147.6">
    <property type="protein sequence ID" value="ENSP00000379451.1"/>
    <property type="gene ID" value="ENSG00000196724.13"/>
</dbReference>
<dbReference type="Ensembl" id="ENST00000595830.5">
    <property type="protein sequence ID" value="ENSP00000471652.1"/>
    <property type="gene ID" value="ENSG00000196724.13"/>
</dbReference>
<dbReference type="Ensembl" id="ENST00000616958.1">
    <property type="protein sequence ID" value="ENSP00000483763.1"/>
    <property type="gene ID" value="ENSG00000196724.13"/>
</dbReference>
<dbReference type="GeneID" id="147686"/>
<dbReference type="KEGG" id="hsa:147686"/>
<dbReference type="MANE-Select" id="ENST00000396147.6">
    <property type="protein sequence ID" value="ENSP00000379451.1"/>
    <property type="RefSeq nucleotide sequence ID" value="NM_133460.3"/>
    <property type="RefSeq protein sequence ID" value="NP_597717.1"/>
</dbReference>
<dbReference type="UCSC" id="uc002qqs.1">
    <property type="organism name" value="human"/>
</dbReference>
<dbReference type="AGR" id="HGNC:20647"/>
<dbReference type="CTD" id="147686"/>
<dbReference type="DisGeNET" id="147686"/>
<dbReference type="GeneCards" id="ZNF418"/>
<dbReference type="HGNC" id="HGNC:20647">
    <property type="gene designation" value="ZNF418"/>
</dbReference>
<dbReference type="HPA" id="ENSG00000196724">
    <property type="expression patterns" value="Low tissue specificity"/>
</dbReference>
<dbReference type="MIM" id="619509">
    <property type="type" value="gene"/>
</dbReference>
<dbReference type="neXtProt" id="NX_Q8TF45"/>
<dbReference type="OpenTargets" id="ENSG00000196724"/>
<dbReference type="PharmGKB" id="PA134912102"/>
<dbReference type="VEuPathDB" id="HostDB:ENSG00000196724"/>
<dbReference type="eggNOG" id="KOG1721">
    <property type="taxonomic scope" value="Eukaryota"/>
</dbReference>
<dbReference type="GeneTree" id="ENSGT00940000164269"/>
<dbReference type="HOGENOM" id="CLU_002678_55_2_1"/>
<dbReference type="InParanoid" id="Q8TF45"/>
<dbReference type="OMA" id="LHRCEDW"/>
<dbReference type="OrthoDB" id="427030at2759"/>
<dbReference type="PAN-GO" id="Q8TF45">
    <property type="GO annotations" value="4 GO annotations based on evolutionary models"/>
</dbReference>
<dbReference type="PhylomeDB" id="Q8TF45"/>
<dbReference type="TreeFam" id="TF339848"/>
<dbReference type="PathwayCommons" id="Q8TF45"/>
<dbReference type="Reactome" id="R-HSA-212436">
    <property type="pathway name" value="Generic Transcription Pathway"/>
</dbReference>
<dbReference type="Reactome" id="R-HSA-9843940">
    <property type="pathway name" value="Regulation of endogenous retroelements by KRAB-ZFP proteins"/>
</dbReference>
<dbReference type="SignaLink" id="Q8TF45"/>
<dbReference type="BioGRID-ORCS" id="147686">
    <property type="hits" value="8 hits in 1169 CRISPR screens"/>
</dbReference>
<dbReference type="ChiTaRS" id="ZNF418">
    <property type="organism name" value="human"/>
</dbReference>
<dbReference type="GenomeRNAi" id="147686"/>
<dbReference type="Pharos" id="Q8TF45">
    <property type="development level" value="Tbio"/>
</dbReference>
<dbReference type="PRO" id="PR:Q8TF45"/>
<dbReference type="Proteomes" id="UP000005640">
    <property type="component" value="Chromosome 19"/>
</dbReference>
<dbReference type="RNAct" id="Q8TF45">
    <property type="molecule type" value="protein"/>
</dbReference>
<dbReference type="Bgee" id="ENSG00000196724">
    <property type="expression patterns" value="Expressed in primordial germ cell in gonad and 113 other cell types or tissues"/>
</dbReference>
<dbReference type="ExpressionAtlas" id="Q8TF45">
    <property type="expression patterns" value="baseline and differential"/>
</dbReference>
<dbReference type="GO" id="GO:0005634">
    <property type="term" value="C:nucleus"/>
    <property type="evidence" value="ECO:0000314"/>
    <property type="project" value="UniProtKB"/>
</dbReference>
<dbReference type="GO" id="GO:0000981">
    <property type="term" value="F:DNA-binding transcription factor activity, RNA polymerase II-specific"/>
    <property type="evidence" value="ECO:0000318"/>
    <property type="project" value="GO_Central"/>
</dbReference>
<dbReference type="GO" id="GO:0001217">
    <property type="term" value="F:DNA-binding transcription repressor activity"/>
    <property type="evidence" value="ECO:0000314"/>
    <property type="project" value="UniProtKB"/>
</dbReference>
<dbReference type="GO" id="GO:0000978">
    <property type="term" value="F:RNA polymerase II cis-regulatory region sequence-specific DNA binding"/>
    <property type="evidence" value="ECO:0000318"/>
    <property type="project" value="GO_Central"/>
</dbReference>
<dbReference type="GO" id="GO:0008270">
    <property type="term" value="F:zinc ion binding"/>
    <property type="evidence" value="ECO:0007669"/>
    <property type="project" value="UniProtKB-KW"/>
</dbReference>
<dbReference type="GO" id="GO:0016237">
    <property type="term" value="P:microautophagy"/>
    <property type="evidence" value="ECO:0000250"/>
    <property type="project" value="UniProtKB"/>
</dbReference>
<dbReference type="GO" id="GO:0032434">
    <property type="term" value="P:regulation of proteasomal ubiquitin-dependent protein catabolic process"/>
    <property type="evidence" value="ECO:0000250"/>
    <property type="project" value="UniProtKB"/>
</dbReference>
<dbReference type="GO" id="GO:0006357">
    <property type="term" value="P:regulation of transcription by RNA polymerase II"/>
    <property type="evidence" value="ECO:0000318"/>
    <property type="project" value="GO_Central"/>
</dbReference>
<dbReference type="CDD" id="cd07765">
    <property type="entry name" value="KRAB_A-box"/>
    <property type="match status" value="1"/>
</dbReference>
<dbReference type="FunFam" id="3.30.160.60:FF:000012">
    <property type="entry name" value="RB-associated KRAB zinc finger protein-like"/>
    <property type="match status" value="1"/>
</dbReference>
<dbReference type="FunFam" id="3.30.160.60:FF:000062">
    <property type="entry name" value="RB-associated KRAB zinc finger protein-like"/>
    <property type="match status" value="1"/>
</dbReference>
<dbReference type="FunFam" id="3.30.160.60:FF:000566">
    <property type="entry name" value="zinc finger protein 133 isoform X2"/>
    <property type="match status" value="1"/>
</dbReference>
<dbReference type="FunFam" id="3.30.160.60:FF:000249">
    <property type="entry name" value="Zinc finger protein 154"/>
    <property type="match status" value="2"/>
</dbReference>
<dbReference type="FunFam" id="3.30.160.60:FF:000295">
    <property type="entry name" value="zinc finger protein 19"/>
    <property type="match status" value="3"/>
</dbReference>
<dbReference type="FunFam" id="3.30.160.60:FF:002343">
    <property type="entry name" value="Zinc finger protein 33A"/>
    <property type="match status" value="3"/>
</dbReference>
<dbReference type="FunFam" id="3.30.160.60:FF:000016">
    <property type="entry name" value="zinc finger protein 37 homolog"/>
    <property type="match status" value="1"/>
</dbReference>
<dbReference type="FunFam" id="3.30.160.60:FF:000200">
    <property type="entry name" value="zinc finger protein 510 isoform X2"/>
    <property type="match status" value="2"/>
</dbReference>
<dbReference type="FunFam" id="3.30.160.60:FF:001437">
    <property type="entry name" value="Zinc finger protein 594"/>
    <property type="match status" value="1"/>
</dbReference>
<dbReference type="FunFam" id="3.30.160.60:FF:000490">
    <property type="entry name" value="Zinc finger protein 605"/>
    <property type="match status" value="1"/>
</dbReference>
<dbReference type="Gene3D" id="6.10.140.140">
    <property type="match status" value="1"/>
</dbReference>
<dbReference type="Gene3D" id="3.30.160.60">
    <property type="entry name" value="Classic Zinc Finger"/>
    <property type="match status" value="16"/>
</dbReference>
<dbReference type="InterPro" id="IPR001909">
    <property type="entry name" value="KRAB"/>
</dbReference>
<dbReference type="InterPro" id="IPR036051">
    <property type="entry name" value="KRAB_dom_sf"/>
</dbReference>
<dbReference type="InterPro" id="IPR036236">
    <property type="entry name" value="Znf_C2H2_sf"/>
</dbReference>
<dbReference type="InterPro" id="IPR013087">
    <property type="entry name" value="Znf_C2H2_type"/>
</dbReference>
<dbReference type="PANTHER" id="PTHR24399:SF54">
    <property type="entry name" value="GASTRULA ZINC FINGER PROTEIN XLCGF26.1-LIKE-RELATED"/>
    <property type="match status" value="1"/>
</dbReference>
<dbReference type="PANTHER" id="PTHR24399">
    <property type="entry name" value="ZINC FINGER AND BTB DOMAIN-CONTAINING"/>
    <property type="match status" value="1"/>
</dbReference>
<dbReference type="Pfam" id="PF01352">
    <property type="entry name" value="KRAB"/>
    <property type="match status" value="1"/>
</dbReference>
<dbReference type="Pfam" id="PF00096">
    <property type="entry name" value="zf-C2H2"/>
    <property type="match status" value="15"/>
</dbReference>
<dbReference type="SMART" id="SM00349">
    <property type="entry name" value="KRAB"/>
    <property type="match status" value="1"/>
</dbReference>
<dbReference type="SMART" id="SM00355">
    <property type="entry name" value="ZnF_C2H2"/>
    <property type="match status" value="17"/>
</dbReference>
<dbReference type="SUPFAM" id="SSF57667">
    <property type="entry name" value="beta-beta-alpha zinc fingers"/>
    <property type="match status" value="10"/>
</dbReference>
<dbReference type="SUPFAM" id="SSF109640">
    <property type="entry name" value="KRAB domain (Kruppel-associated box)"/>
    <property type="match status" value="1"/>
</dbReference>
<dbReference type="PROSITE" id="PS50805">
    <property type="entry name" value="KRAB"/>
    <property type="match status" value="1"/>
</dbReference>
<dbReference type="PROSITE" id="PS00028">
    <property type="entry name" value="ZINC_FINGER_C2H2_1"/>
    <property type="match status" value="16"/>
</dbReference>
<dbReference type="PROSITE" id="PS50157">
    <property type="entry name" value="ZINC_FINGER_C2H2_2"/>
    <property type="match status" value="16"/>
</dbReference>
<evidence type="ECO:0000250" key="1">
    <source>
        <dbReference type="UniProtKB" id="Q8BFS8"/>
    </source>
</evidence>
<evidence type="ECO:0000255" key="2">
    <source>
        <dbReference type="PROSITE-ProRule" id="PRU00042"/>
    </source>
</evidence>
<evidence type="ECO:0000255" key="3">
    <source>
        <dbReference type="PROSITE-ProRule" id="PRU00119"/>
    </source>
</evidence>
<evidence type="ECO:0000269" key="4">
    <source>
    </source>
</evidence>
<evidence type="ECO:0000305" key="5"/>
<keyword id="KW-0238">DNA-binding</keyword>
<keyword id="KW-0479">Metal-binding</keyword>
<keyword id="KW-0539">Nucleus</keyword>
<keyword id="KW-1267">Proteomics identification</keyword>
<keyword id="KW-1185">Reference proteome</keyword>
<keyword id="KW-0677">Repeat</keyword>
<keyword id="KW-0678">Repressor</keyword>
<keyword id="KW-0804">Transcription</keyword>
<keyword id="KW-0805">Transcription regulation</keyword>
<keyword id="KW-0862">Zinc</keyword>
<keyword id="KW-0863">Zinc-finger</keyword>
<sequence length="676" mass="77858">MQGTVAFEDVAVNFSQEEWSLLSEVQRCLYHDVMLENWVLISSLGCWCGSEDEEAPSKKSISIQRVSQVSTPGAGVSPKKAHSCEMCGAILGDILHLADHQGTHHKQKLHRCEAWGNKLYDSSNRPHQNQYLGEKPYRSSVEEALFVKRCKFHVSEESSIFIQSGKDFLPSSGLLLQEATHTGEKSNSKPECESPFQWGDTHYSCGECMKHSSTKHVFVQQQRLPSREECYCWECGKSFSKYDSVSNHQRVHTGKRPYECGECGKSFSHKGSLVQHQRVHTGKRPYECGECGKSFSHKGSLVQHQRVHTGERPYECGECGKSFSQNGTLIKHQRVHTGERPYECEECGKCFTQKGNLIQHQRGHTSERPYECEECGKCFSQKGTLTEHHRVHTRERPYECGECGKSFSRKGHLRNHQRGHTGERPYECGECGKSFSRKGNLIQHQRSHTGERPYECRECRKLFRGKSHLIEHQRVHTGERPYECNECGKSFQDSSGFRVHQRVHTGEKPFECSECGKSFPQSCSLLRHRRVHTGERPYECGECGKSFHQSSSLLRHQKTHTAERPYECRECGKFFSSLLEHRRVHTGERPYECRECGKTFTRRSAHFKHQRLHTRGKPYECSECGKSFAETFSLTEHRRVHTGERPYECSECGKSFHRSSSLLRHQRVHTERSPYK</sequence>
<reference key="1">
    <citation type="journal article" date="2008" name="Mol. Cell. Biochem.">
        <title>ZNF418, a novel human KRAB/C2H2 zinc finger protein, suppresses MAPK signaling pathway.</title>
        <authorList>
            <person name="Li Y."/>
            <person name="Yang D."/>
            <person name="Bai Y."/>
            <person name="Mo X."/>
            <person name="Huang W."/>
            <person name="Yuan W."/>
            <person name="Yin Z."/>
            <person name="Deng Y."/>
            <person name="Murashko O."/>
            <person name="Wang Y."/>
            <person name="Fan X."/>
            <person name="Zhu C."/>
            <person name="Ocorr K."/>
            <person name="Bodmer R."/>
            <person name="Wu X."/>
        </authorList>
    </citation>
    <scope>NUCLEOTIDE SEQUENCE [MRNA]</scope>
    <scope>FUNCTION</scope>
    <scope>SUBCELLULAR LOCATION</scope>
    <scope>TISSUE SPECIFICITY</scope>
    <scope>DOMAIN</scope>
</reference>
<reference key="2">
    <citation type="journal article" date="2001" name="DNA Res.">
        <title>Prediction of the coding sequences of unidentified human genes. XXII. The complete sequences of 50 new cDNA clones which code for large proteins.</title>
        <authorList>
            <person name="Nagase T."/>
            <person name="Kikuno R."/>
            <person name="Ohara O."/>
        </authorList>
    </citation>
    <scope>NUCLEOTIDE SEQUENCE [LARGE SCALE MRNA]</scope>
    <source>
        <tissue>Brain</tissue>
    </source>
</reference>
<reference key="3">
    <citation type="journal article" date="2004" name="Nat. Genet.">
        <title>Complete sequencing and characterization of 21,243 full-length human cDNAs.</title>
        <authorList>
            <person name="Ota T."/>
            <person name="Suzuki Y."/>
            <person name="Nishikawa T."/>
            <person name="Otsuki T."/>
            <person name="Sugiyama T."/>
            <person name="Irie R."/>
            <person name="Wakamatsu A."/>
            <person name="Hayashi K."/>
            <person name="Sato H."/>
            <person name="Nagai K."/>
            <person name="Kimura K."/>
            <person name="Makita H."/>
            <person name="Sekine M."/>
            <person name="Obayashi M."/>
            <person name="Nishi T."/>
            <person name="Shibahara T."/>
            <person name="Tanaka T."/>
            <person name="Ishii S."/>
            <person name="Yamamoto J."/>
            <person name="Saito K."/>
            <person name="Kawai Y."/>
            <person name="Isono Y."/>
            <person name="Nakamura Y."/>
            <person name="Nagahari K."/>
            <person name="Murakami K."/>
            <person name="Yasuda T."/>
            <person name="Iwayanagi T."/>
            <person name="Wagatsuma M."/>
            <person name="Shiratori A."/>
            <person name="Sudo H."/>
            <person name="Hosoiri T."/>
            <person name="Kaku Y."/>
            <person name="Kodaira H."/>
            <person name="Kondo H."/>
            <person name="Sugawara M."/>
            <person name="Takahashi M."/>
            <person name="Kanda K."/>
            <person name="Yokoi T."/>
            <person name="Furuya T."/>
            <person name="Kikkawa E."/>
            <person name="Omura Y."/>
            <person name="Abe K."/>
            <person name="Kamihara K."/>
            <person name="Katsuta N."/>
            <person name="Sato K."/>
            <person name="Tanikawa M."/>
            <person name="Yamazaki M."/>
            <person name="Ninomiya K."/>
            <person name="Ishibashi T."/>
            <person name="Yamashita H."/>
            <person name="Murakawa K."/>
            <person name="Fujimori K."/>
            <person name="Tanai H."/>
            <person name="Kimata M."/>
            <person name="Watanabe M."/>
            <person name="Hiraoka S."/>
            <person name="Chiba Y."/>
            <person name="Ishida S."/>
            <person name="Ono Y."/>
            <person name="Takiguchi S."/>
            <person name="Watanabe S."/>
            <person name="Yosida M."/>
            <person name="Hotuta T."/>
            <person name="Kusano J."/>
            <person name="Kanehori K."/>
            <person name="Takahashi-Fujii A."/>
            <person name="Hara H."/>
            <person name="Tanase T.-O."/>
            <person name="Nomura Y."/>
            <person name="Togiya S."/>
            <person name="Komai F."/>
            <person name="Hara R."/>
            <person name="Takeuchi K."/>
            <person name="Arita M."/>
            <person name="Imose N."/>
            <person name="Musashino K."/>
            <person name="Yuuki H."/>
            <person name="Oshima A."/>
            <person name="Sasaki N."/>
            <person name="Aotsuka S."/>
            <person name="Yoshikawa Y."/>
            <person name="Matsunawa H."/>
            <person name="Ichihara T."/>
            <person name="Shiohata N."/>
            <person name="Sano S."/>
            <person name="Moriya S."/>
            <person name="Momiyama H."/>
            <person name="Satoh N."/>
            <person name="Takami S."/>
            <person name="Terashima Y."/>
            <person name="Suzuki O."/>
            <person name="Nakagawa S."/>
            <person name="Senoh A."/>
            <person name="Mizoguchi H."/>
            <person name="Goto Y."/>
            <person name="Shimizu F."/>
            <person name="Wakebe H."/>
            <person name="Hishigaki H."/>
            <person name="Watanabe T."/>
            <person name="Sugiyama A."/>
            <person name="Takemoto M."/>
            <person name="Kawakami B."/>
            <person name="Yamazaki M."/>
            <person name="Watanabe K."/>
            <person name="Kumagai A."/>
            <person name="Itakura S."/>
            <person name="Fukuzumi Y."/>
            <person name="Fujimori Y."/>
            <person name="Komiyama M."/>
            <person name="Tashiro H."/>
            <person name="Tanigami A."/>
            <person name="Fujiwara T."/>
            <person name="Ono T."/>
            <person name="Yamada K."/>
            <person name="Fujii Y."/>
            <person name="Ozaki K."/>
            <person name="Hirao M."/>
            <person name="Ohmori Y."/>
            <person name="Kawabata A."/>
            <person name="Hikiji T."/>
            <person name="Kobatake N."/>
            <person name="Inagaki H."/>
            <person name="Ikema Y."/>
            <person name="Okamoto S."/>
            <person name="Okitani R."/>
            <person name="Kawakami T."/>
            <person name="Noguchi S."/>
            <person name="Itoh T."/>
            <person name="Shigeta K."/>
            <person name="Senba T."/>
            <person name="Matsumura K."/>
            <person name="Nakajima Y."/>
            <person name="Mizuno T."/>
            <person name="Morinaga M."/>
            <person name="Sasaki M."/>
            <person name="Togashi T."/>
            <person name="Oyama M."/>
            <person name="Hata H."/>
            <person name="Watanabe M."/>
            <person name="Komatsu T."/>
            <person name="Mizushima-Sugano J."/>
            <person name="Satoh T."/>
            <person name="Shirai Y."/>
            <person name="Takahashi Y."/>
            <person name="Nakagawa K."/>
            <person name="Okumura K."/>
            <person name="Nagase T."/>
            <person name="Nomura N."/>
            <person name="Kikuchi H."/>
            <person name="Masuho Y."/>
            <person name="Yamashita R."/>
            <person name="Nakai K."/>
            <person name="Yada T."/>
            <person name="Nakamura Y."/>
            <person name="Ohara O."/>
            <person name="Isogai T."/>
            <person name="Sugano S."/>
        </authorList>
    </citation>
    <scope>NUCLEOTIDE SEQUENCE [LARGE SCALE MRNA]</scope>
</reference>
<reference key="4">
    <citation type="journal article" date="2004" name="Nature">
        <title>The DNA sequence and biology of human chromosome 19.</title>
        <authorList>
            <person name="Grimwood J."/>
            <person name="Gordon L.A."/>
            <person name="Olsen A.S."/>
            <person name="Terry A."/>
            <person name="Schmutz J."/>
            <person name="Lamerdin J.E."/>
            <person name="Hellsten U."/>
            <person name="Goodstein D."/>
            <person name="Couronne O."/>
            <person name="Tran-Gyamfi M."/>
            <person name="Aerts A."/>
            <person name="Altherr M."/>
            <person name="Ashworth L."/>
            <person name="Bajorek E."/>
            <person name="Black S."/>
            <person name="Branscomb E."/>
            <person name="Caenepeel S."/>
            <person name="Carrano A.V."/>
            <person name="Caoile C."/>
            <person name="Chan Y.M."/>
            <person name="Christensen M."/>
            <person name="Cleland C.A."/>
            <person name="Copeland A."/>
            <person name="Dalin E."/>
            <person name="Dehal P."/>
            <person name="Denys M."/>
            <person name="Detter J.C."/>
            <person name="Escobar J."/>
            <person name="Flowers D."/>
            <person name="Fotopulos D."/>
            <person name="Garcia C."/>
            <person name="Georgescu A.M."/>
            <person name="Glavina T."/>
            <person name="Gomez M."/>
            <person name="Gonzales E."/>
            <person name="Groza M."/>
            <person name="Hammon N."/>
            <person name="Hawkins T."/>
            <person name="Haydu L."/>
            <person name="Ho I."/>
            <person name="Huang W."/>
            <person name="Israni S."/>
            <person name="Jett J."/>
            <person name="Kadner K."/>
            <person name="Kimball H."/>
            <person name="Kobayashi A."/>
            <person name="Larionov V."/>
            <person name="Leem S.-H."/>
            <person name="Lopez F."/>
            <person name="Lou Y."/>
            <person name="Lowry S."/>
            <person name="Malfatti S."/>
            <person name="Martinez D."/>
            <person name="McCready P.M."/>
            <person name="Medina C."/>
            <person name="Morgan J."/>
            <person name="Nelson K."/>
            <person name="Nolan M."/>
            <person name="Ovcharenko I."/>
            <person name="Pitluck S."/>
            <person name="Pollard M."/>
            <person name="Popkie A.P."/>
            <person name="Predki P."/>
            <person name="Quan G."/>
            <person name="Ramirez L."/>
            <person name="Rash S."/>
            <person name="Retterer J."/>
            <person name="Rodriguez A."/>
            <person name="Rogers S."/>
            <person name="Salamov A."/>
            <person name="Salazar A."/>
            <person name="She X."/>
            <person name="Smith D."/>
            <person name="Slezak T."/>
            <person name="Solovyev V."/>
            <person name="Thayer N."/>
            <person name="Tice H."/>
            <person name="Tsai M."/>
            <person name="Ustaszewska A."/>
            <person name="Vo N."/>
            <person name="Wagner M."/>
            <person name="Wheeler J."/>
            <person name="Wu K."/>
            <person name="Xie G."/>
            <person name="Yang J."/>
            <person name="Dubchak I."/>
            <person name="Furey T.S."/>
            <person name="DeJong P."/>
            <person name="Dickson M."/>
            <person name="Gordon D."/>
            <person name="Eichler E.E."/>
            <person name="Pennacchio L.A."/>
            <person name="Richardson P."/>
            <person name="Stubbs L."/>
            <person name="Rokhsar D.S."/>
            <person name="Myers R.M."/>
            <person name="Rubin E.M."/>
            <person name="Lucas S.M."/>
        </authorList>
    </citation>
    <scope>NUCLEOTIDE SEQUENCE [LARGE SCALE GENOMIC DNA]</scope>
</reference>
<reference key="5">
    <citation type="journal article" date="2004" name="Genome Res.">
        <title>The status, quality, and expansion of the NIH full-length cDNA project: the Mammalian Gene Collection (MGC).</title>
        <authorList>
            <consortium name="The MGC Project Team"/>
        </authorList>
    </citation>
    <scope>NUCLEOTIDE SEQUENCE [LARGE SCALE MRNA]</scope>
    <source>
        <tissue>Brain</tissue>
    </source>
</reference>
<feature type="chain" id="PRO_0000047573" description="Zinc finger protein 418">
    <location>
        <begin position="1"/>
        <end position="676"/>
    </location>
</feature>
<feature type="domain" description="KRAB" evidence="3">
    <location>
        <begin position="5"/>
        <end position="91"/>
    </location>
</feature>
<feature type="zinc finger region" description="C2H2-type 1" evidence="2">
    <location>
        <begin position="82"/>
        <end position="105"/>
    </location>
</feature>
<feature type="zinc finger region" description="C2H2-type 2" evidence="2">
    <location>
        <begin position="230"/>
        <end position="252"/>
    </location>
</feature>
<feature type="zinc finger region" description="C2H2-type 3" evidence="2">
    <location>
        <begin position="258"/>
        <end position="280"/>
    </location>
</feature>
<feature type="zinc finger region" description="C2H2-type 4" evidence="2">
    <location>
        <begin position="286"/>
        <end position="308"/>
    </location>
</feature>
<feature type="zinc finger region" description="C2H2-type 5" evidence="2">
    <location>
        <begin position="314"/>
        <end position="336"/>
    </location>
</feature>
<feature type="zinc finger region" description="C2H2-type 6" evidence="2">
    <location>
        <begin position="342"/>
        <end position="364"/>
    </location>
</feature>
<feature type="zinc finger region" description="C2H2-type 7" evidence="2">
    <location>
        <begin position="370"/>
        <end position="392"/>
    </location>
</feature>
<feature type="zinc finger region" description="C2H2-type 8" evidence="2">
    <location>
        <begin position="398"/>
        <end position="420"/>
    </location>
</feature>
<feature type="zinc finger region" description="C2H2-type 9" evidence="2">
    <location>
        <begin position="426"/>
        <end position="448"/>
    </location>
</feature>
<feature type="zinc finger region" description="C2H2-type 10" evidence="2">
    <location>
        <begin position="454"/>
        <end position="476"/>
    </location>
</feature>
<feature type="zinc finger region" description="C2H2-type 11" evidence="2">
    <location>
        <begin position="482"/>
        <end position="504"/>
    </location>
</feature>
<feature type="zinc finger region" description="C2H2-type 12" evidence="2">
    <location>
        <begin position="510"/>
        <end position="532"/>
    </location>
</feature>
<feature type="zinc finger region" description="C2H2-type 13" evidence="2">
    <location>
        <begin position="538"/>
        <end position="560"/>
    </location>
</feature>
<feature type="zinc finger region" description="C2H2-type 14" evidence="2">
    <location>
        <begin position="591"/>
        <end position="613"/>
    </location>
</feature>
<feature type="zinc finger region" description="C2H2-type 15" evidence="2">
    <location>
        <begin position="619"/>
        <end position="641"/>
    </location>
</feature>
<feature type="zinc finger region" description="C2H2-type 16" evidence="2">
    <location>
        <begin position="647"/>
        <end position="669"/>
    </location>
</feature>
<feature type="sequence conflict" description="In Ref. 3; BAB71096." evidence="5" ref="3">
    <original>E</original>
    <variation>G</variation>
    <location>
        <position position="290"/>
    </location>
</feature>
<proteinExistence type="evidence at protein level"/>
<comment type="function">
    <text evidence="1 4">Transcriptional repressor (PubMed:18084723). May play a role as regulator of the ubiquitin-proteasome system and autophagy-lysosomal pathway (By similarity).</text>
</comment>
<comment type="interaction">
    <interactant intactId="EBI-3446851">
        <id>Q8TF45</id>
    </interactant>
    <interactant intactId="EBI-12012928">
        <id>P60371</id>
        <label>KRTAP10-6</label>
    </interactant>
    <organismsDiffer>false</organismsDiffer>
    <experiments>3</experiments>
</comment>
<comment type="interaction">
    <interactant intactId="EBI-3446851">
        <id>Q8TF45</id>
    </interactant>
    <interactant intactId="EBI-10172290">
        <id>P60409</id>
        <label>KRTAP10-7</label>
    </interactant>
    <organismsDiffer>false</organismsDiffer>
    <experiments>3</experiments>
</comment>
<comment type="subcellular location">
    <subcellularLocation>
        <location evidence="4">Nucleus</location>
    </subcellularLocation>
</comment>
<comment type="tissue specificity">
    <text evidence="4">Highly expressed in heart.</text>
</comment>
<comment type="domain">
    <text evidence="4">The KRAB domain mediates the transcription repressor activity.</text>
</comment>
<comment type="similarity">
    <text evidence="5">Belongs to the krueppel C2H2-type zinc-finger protein family.</text>
</comment>
<comment type="sequence caution" evidence="5">
    <conflict type="erroneous initiation">
        <sequence resource="EMBL-CDS" id="BAB85542"/>
    </conflict>
    <text>Extended N-terminus.</text>
</comment>
<gene>
    <name type="primary">ZNF418</name>
    <name type="synonym">KIAA1956</name>
</gene>
<accession>Q8TF45</accession>
<accession>Q2M1S2</accession>
<accession>Q670L5</accession>
<accession>Q96N18</accession>
<organism>
    <name type="scientific">Homo sapiens</name>
    <name type="common">Human</name>
    <dbReference type="NCBI Taxonomy" id="9606"/>
    <lineage>
        <taxon>Eukaryota</taxon>
        <taxon>Metazoa</taxon>
        <taxon>Chordata</taxon>
        <taxon>Craniata</taxon>
        <taxon>Vertebrata</taxon>
        <taxon>Euteleostomi</taxon>
        <taxon>Mammalia</taxon>
        <taxon>Eutheria</taxon>
        <taxon>Euarchontoglires</taxon>
        <taxon>Primates</taxon>
        <taxon>Haplorrhini</taxon>
        <taxon>Catarrhini</taxon>
        <taxon>Hominidae</taxon>
        <taxon>Homo</taxon>
    </lineage>
</organism>
<name>ZN418_HUMAN</name>